<proteinExistence type="inferred from homology"/>
<dbReference type="EC" id="4.1.1.31" evidence="1"/>
<dbReference type="EMBL" id="CP000450">
    <property type="protein sequence ID" value="ABI59292.1"/>
    <property type="molecule type" value="Genomic_DNA"/>
</dbReference>
<dbReference type="RefSeq" id="WP_011634115.1">
    <property type="nucleotide sequence ID" value="NC_008344.1"/>
</dbReference>
<dbReference type="SMR" id="Q0AH90"/>
<dbReference type="STRING" id="335283.Neut_1036"/>
<dbReference type="KEGG" id="net:Neut_1036"/>
<dbReference type="eggNOG" id="COG2352">
    <property type="taxonomic scope" value="Bacteria"/>
</dbReference>
<dbReference type="HOGENOM" id="CLU_006557_2_0_4"/>
<dbReference type="OrthoDB" id="9768133at2"/>
<dbReference type="Proteomes" id="UP000001966">
    <property type="component" value="Chromosome"/>
</dbReference>
<dbReference type="GO" id="GO:0005829">
    <property type="term" value="C:cytosol"/>
    <property type="evidence" value="ECO:0007669"/>
    <property type="project" value="TreeGrafter"/>
</dbReference>
<dbReference type="GO" id="GO:0000287">
    <property type="term" value="F:magnesium ion binding"/>
    <property type="evidence" value="ECO:0007669"/>
    <property type="project" value="UniProtKB-UniRule"/>
</dbReference>
<dbReference type="GO" id="GO:0008964">
    <property type="term" value="F:phosphoenolpyruvate carboxylase activity"/>
    <property type="evidence" value="ECO:0007669"/>
    <property type="project" value="UniProtKB-UniRule"/>
</dbReference>
<dbReference type="GO" id="GO:0015977">
    <property type="term" value="P:carbon fixation"/>
    <property type="evidence" value="ECO:0007669"/>
    <property type="project" value="UniProtKB-UniRule"/>
</dbReference>
<dbReference type="GO" id="GO:0006107">
    <property type="term" value="P:oxaloacetate metabolic process"/>
    <property type="evidence" value="ECO:0007669"/>
    <property type="project" value="UniProtKB-UniRule"/>
</dbReference>
<dbReference type="GO" id="GO:0006099">
    <property type="term" value="P:tricarboxylic acid cycle"/>
    <property type="evidence" value="ECO:0007669"/>
    <property type="project" value="InterPro"/>
</dbReference>
<dbReference type="Gene3D" id="1.20.1440.90">
    <property type="entry name" value="Phosphoenolpyruvate/pyruvate domain"/>
    <property type="match status" value="1"/>
</dbReference>
<dbReference type="HAMAP" id="MF_00595">
    <property type="entry name" value="PEPcase_type1"/>
    <property type="match status" value="1"/>
</dbReference>
<dbReference type="InterPro" id="IPR021135">
    <property type="entry name" value="PEP_COase"/>
</dbReference>
<dbReference type="InterPro" id="IPR022805">
    <property type="entry name" value="PEP_COase_bac/pln-type"/>
</dbReference>
<dbReference type="InterPro" id="IPR018129">
    <property type="entry name" value="PEP_COase_Lys_AS"/>
</dbReference>
<dbReference type="InterPro" id="IPR033129">
    <property type="entry name" value="PEPCASE_His_AS"/>
</dbReference>
<dbReference type="InterPro" id="IPR015813">
    <property type="entry name" value="Pyrv/PenolPyrv_kinase-like_dom"/>
</dbReference>
<dbReference type="NCBIfam" id="NF000584">
    <property type="entry name" value="PRK00009.1"/>
    <property type="match status" value="1"/>
</dbReference>
<dbReference type="PANTHER" id="PTHR30523">
    <property type="entry name" value="PHOSPHOENOLPYRUVATE CARBOXYLASE"/>
    <property type="match status" value="1"/>
</dbReference>
<dbReference type="PANTHER" id="PTHR30523:SF6">
    <property type="entry name" value="PHOSPHOENOLPYRUVATE CARBOXYLASE"/>
    <property type="match status" value="1"/>
</dbReference>
<dbReference type="Pfam" id="PF00311">
    <property type="entry name" value="PEPcase"/>
    <property type="match status" value="1"/>
</dbReference>
<dbReference type="PRINTS" id="PR00150">
    <property type="entry name" value="PEPCARBXLASE"/>
</dbReference>
<dbReference type="SUPFAM" id="SSF51621">
    <property type="entry name" value="Phosphoenolpyruvate/pyruvate domain"/>
    <property type="match status" value="1"/>
</dbReference>
<dbReference type="PROSITE" id="PS00781">
    <property type="entry name" value="PEPCASE_1"/>
    <property type="match status" value="1"/>
</dbReference>
<dbReference type="PROSITE" id="PS00393">
    <property type="entry name" value="PEPCASE_2"/>
    <property type="match status" value="1"/>
</dbReference>
<reference key="1">
    <citation type="journal article" date="2007" name="Environ. Microbiol.">
        <title>Whole-genome analysis of the ammonia-oxidizing bacterium, Nitrosomonas eutropha C91: implications for niche adaptation.</title>
        <authorList>
            <person name="Stein L.Y."/>
            <person name="Arp D.J."/>
            <person name="Berube P.M."/>
            <person name="Chain P.S."/>
            <person name="Hauser L."/>
            <person name="Jetten M.S."/>
            <person name="Klotz M.G."/>
            <person name="Larimer F.W."/>
            <person name="Norton J.M."/>
            <person name="Op den Camp H.J.M."/>
            <person name="Shin M."/>
            <person name="Wei X."/>
        </authorList>
    </citation>
    <scope>NUCLEOTIDE SEQUENCE [LARGE SCALE GENOMIC DNA]</scope>
    <source>
        <strain>DSM 101675 / C91 / Nm57</strain>
    </source>
</reference>
<organism>
    <name type="scientific">Nitrosomonas eutropha (strain DSM 101675 / C91 / Nm57)</name>
    <dbReference type="NCBI Taxonomy" id="335283"/>
    <lineage>
        <taxon>Bacteria</taxon>
        <taxon>Pseudomonadati</taxon>
        <taxon>Pseudomonadota</taxon>
        <taxon>Betaproteobacteria</taxon>
        <taxon>Nitrosomonadales</taxon>
        <taxon>Nitrosomonadaceae</taxon>
        <taxon>Nitrosomonas</taxon>
    </lineage>
</organism>
<protein>
    <recommendedName>
        <fullName evidence="1">Phosphoenolpyruvate carboxylase</fullName>
        <shortName evidence="1">PEPC</shortName>
        <shortName evidence="1">PEPCase</shortName>
        <ecNumber evidence="1">4.1.1.31</ecNumber>
    </recommendedName>
</protein>
<accession>Q0AH90</accession>
<comment type="function">
    <text evidence="1">Forms oxaloacetate, a four-carbon dicarboxylic acid source for the tricarboxylic acid cycle.</text>
</comment>
<comment type="catalytic activity">
    <reaction evidence="1">
        <text>oxaloacetate + phosphate = phosphoenolpyruvate + hydrogencarbonate</text>
        <dbReference type="Rhea" id="RHEA:28370"/>
        <dbReference type="ChEBI" id="CHEBI:16452"/>
        <dbReference type="ChEBI" id="CHEBI:17544"/>
        <dbReference type="ChEBI" id="CHEBI:43474"/>
        <dbReference type="ChEBI" id="CHEBI:58702"/>
        <dbReference type="EC" id="4.1.1.31"/>
    </reaction>
</comment>
<comment type="cofactor">
    <cofactor evidence="1">
        <name>Mg(2+)</name>
        <dbReference type="ChEBI" id="CHEBI:18420"/>
    </cofactor>
</comment>
<comment type="similarity">
    <text evidence="1">Belongs to the PEPCase type 1 family.</text>
</comment>
<sequence>MSLNTLANIVPEKDTSLEKDHPLREDIRLLGRMLGDTIRELEGEPMFDLVETIRQTAVRFRREQDEEAGKELDTILNHLSHKETTAVVRAFSYFSLLSNIAEDLHHNRRRRAHLRAGSPPQDGSVTLALERVVAKGINTQQLENFFAEALISPVLTAHPTEVQRRSILDYQLKIQRLLKERDRTQLTPNELRHNEEDLRSAIQTLWQTRVLRSVRLTVQDEIENGLIYYHYTFLKQIPYIYAKIEDILERHMDKAAPCIASFLRIGSWIGGDRDGNPFVTHQIMLHAAERHSALILDYYIEEVEKIGQAMSLTERLIKVTSELEGLASTAPGLPASRIDEPYRRVFLGMHTRLIATSRYLSPHVGRQYQENTAEPYADSAEFVHDLDIVIRSLKQHQSNKLAQGAIRDLRRAVDVFGFHLASLDMRQHSKIHEQVVSELYEKNAQDNRNYPDLTRAERAEWLLAELKRSHPLVSSLSDYSDITQGELRILRMAAEIQRRFGHVALPNYIISMATGVIHILEAALLLKEAGLLQFGEAARSTVNIIPLFETIDDLRGCANVMEELFSLPEYRKMLRSRSNLQEVMLGYSDSNKDGGFVTSNWEIHKAEIELTKVFNRHGVRLRLFHGRGGTVGRGGGPSYQGILAQPPGSVNGQIRLTEQGEVIASKYTDPEIGRRNLETLVAATIESTLLDRDAIHCHTPQCYQIMEELSASAYAAYRDLVYKTPNFTQFFQESTPIREIAGLHIGSRPTSRKPSNKIEDLRTIPWVFSWSLNRTMIPGWYGFGTAVENFVQQAGNTQDVLIQMQKMYRTWPFFQTLLSNMDMVLAKSDLGIASRYAELVTDSELRQYVFTAIRTEWELCVKWLFAITGHTELLQDNPTLARSIRIRTPYIDPMNHLQVELLRRYRSGDDDDAIRRAIHLTINGVATGLRNSG</sequence>
<name>CAPP_NITEC</name>
<evidence type="ECO:0000255" key="1">
    <source>
        <dbReference type="HAMAP-Rule" id="MF_00595"/>
    </source>
</evidence>
<gene>
    <name evidence="1" type="primary">ppc</name>
    <name type="ordered locus">Neut_1036</name>
</gene>
<feature type="chain" id="PRO_1000025569" description="Phosphoenolpyruvate carboxylase">
    <location>
        <begin position="1"/>
        <end position="933"/>
    </location>
</feature>
<feature type="active site" evidence="1">
    <location>
        <position position="158"/>
    </location>
</feature>
<feature type="active site" evidence="1">
    <location>
        <position position="592"/>
    </location>
</feature>
<keyword id="KW-0120">Carbon dioxide fixation</keyword>
<keyword id="KW-0456">Lyase</keyword>
<keyword id="KW-0460">Magnesium</keyword>